<evidence type="ECO:0000250" key="1">
    <source>
        <dbReference type="UniProtKB" id="G3C7W6"/>
    </source>
</evidence>
<evidence type="ECO:0000250" key="2">
    <source>
        <dbReference type="UniProtKB" id="Q80ZD3"/>
    </source>
</evidence>
<evidence type="ECO:0000250" key="3">
    <source>
        <dbReference type="UniProtKB" id="Q86WA9"/>
    </source>
</evidence>
<evidence type="ECO:0000255" key="4"/>
<evidence type="ECO:0000255" key="5">
    <source>
        <dbReference type="PROSITE-ProRule" id="PRU00198"/>
    </source>
</evidence>
<evidence type="ECO:0000305" key="6"/>
<evidence type="ECO:0000312" key="7">
    <source>
        <dbReference type="EMBL" id="AAI49314.1"/>
    </source>
</evidence>
<evidence type="ECO:0000312" key="8">
    <source>
        <dbReference type="EMBL" id="AAX46512.1"/>
    </source>
</evidence>
<gene>
    <name evidence="8" type="primary">SLC26A11</name>
</gene>
<proteinExistence type="evidence at transcript level"/>
<feature type="chain" id="PRO_0000320685" description="Sodium-independent sulfate anion transporter">
    <location>
        <begin position="1"/>
        <end position="602"/>
    </location>
</feature>
<feature type="topological domain" description="Extracellular" evidence="4">
    <location>
        <begin position="1"/>
        <end position="47"/>
    </location>
</feature>
<feature type="transmembrane region" description="Helical" evidence="4">
    <location>
        <begin position="48"/>
        <end position="68"/>
    </location>
</feature>
<feature type="topological domain" description="Cytoplasmic" evidence="4">
    <location>
        <position position="69"/>
    </location>
</feature>
<feature type="transmembrane region" description="Helical" evidence="4">
    <location>
        <begin position="70"/>
        <end position="90"/>
    </location>
</feature>
<feature type="topological domain" description="Extracellular" evidence="4">
    <location>
        <begin position="91"/>
        <end position="115"/>
    </location>
</feature>
<feature type="transmembrane region" description="Helical" evidence="4">
    <location>
        <begin position="116"/>
        <end position="136"/>
    </location>
</feature>
<feature type="topological domain" description="Cytoplasmic" evidence="4">
    <location>
        <begin position="137"/>
        <end position="143"/>
    </location>
</feature>
<feature type="transmembrane region" description="Helical" evidence="4">
    <location>
        <begin position="144"/>
        <end position="164"/>
    </location>
</feature>
<feature type="topological domain" description="Extracellular" evidence="4">
    <location>
        <begin position="165"/>
        <end position="193"/>
    </location>
</feature>
<feature type="transmembrane region" description="Helical" evidence="4">
    <location>
        <begin position="194"/>
        <end position="214"/>
    </location>
</feature>
<feature type="topological domain" description="Cytoplasmic" evidence="4">
    <location>
        <begin position="215"/>
        <end position="246"/>
    </location>
</feature>
<feature type="transmembrane region" description="Helical" evidence="4">
    <location>
        <begin position="247"/>
        <end position="267"/>
    </location>
</feature>
<feature type="topological domain" description="Extracellular" evidence="4">
    <location>
        <begin position="268"/>
        <end position="300"/>
    </location>
</feature>
<feature type="transmembrane region" description="Helical" evidence="4">
    <location>
        <begin position="301"/>
        <end position="321"/>
    </location>
</feature>
<feature type="topological domain" description="Cytoplasmic" evidence="4">
    <location>
        <begin position="322"/>
        <end position="337"/>
    </location>
</feature>
<feature type="transmembrane region" description="Helical" evidence="4">
    <location>
        <begin position="338"/>
        <end position="358"/>
    </location>
</feature>
<feature type="topological domain" description="Extracellular" evidence="4">
    <location>
        <begin position="359"/>
        <end position="370"/>
    </location>
</feature>
<feature type="transmembrane region" description="Helical" evidence="4">
    <location>
        <begin position="371"/>
        <end position="391"/>
    </location>
</feature>
<feature type="topological domain" description="Cytoplasmic" evidence="4">
    <location>
        <begin position="392"/>
        <end position="394"/>
    </location>
</feature>
<feature type="transmembrane region" description="Helical" evidence="4">
    <location>
        <begin position="395"/>
        <end position="415"/>
    </location>
</feature>
<feature type="topological domain" description="Extracellular" evidence="4">
    <location>
        <begin position="416"/>
        <end position="438"/>
    </location>
</feature>
<feature type="transmembrane region" description="Helical" evidence="4">
    <location>
        <begin position="439"/>
        <end position="459"/>
    </location>
</feature>
<feature type="topological domain" description="Cytoplasmic" evidence="4">
    <location>
        <begin position="460"/>
        <end position="602"/>
    </location>
</feature>
<feature type="domain" description="STAS" evidence="5">
    <location>
        <begin position="466"/>
        <end position="580"/>
    </location>
</feature>
<feature type="sequence conflict" description="In Ref. 2; AAI49314." evidence="6" ref="2">
    <original>C</original>
    <variation>R</variation>
    <location>
        <position position="84"/>
    </location>
</feature>
<comment type="function">
    <text evidence="1 2 3">Sodium-independent anion exchanger mediating bicarbonate, chloride, sulfate and oxalate transport (By similarity). Exhibits sodium-independent sulfate anion transporter activity that may cooperate with SLC26A2 to mediate DIDS-sensitive sulfate uptake into high endothelial venules endothelial cells (HEVEC) (By similarity). In the kidney, mediates chloride-bicarbonate exchange, facilitating V-ATPase-mediated acid secretion (By similarity). May function as a chloride channel, playing an important role in moderating chloride homeostasis and neuronal activity in the cerebellum (By similarity).</text>
</comment>
<comment type="catalytic activity">
    <reaction evidence="1">
        <text>hydrogencarbonate(in) + chloride(out) = hydrogencarbonate(out) + chloride(in)</text>
        <dbReference type="Rhea" id="RHEA:72363"/>
        <dbReference type="ChEBI" id="CHEBI:17544"/>
        <dbReference type="ChEBI" id="CHEBI:17996"/>
    </reaction>
</comment>
<comment type="catalytic activity">
    <reaction evidence="1">
        <text>sulfate(in) + H(+)(in) = sulfate(out) + H(+)(out)</text>
        <dbReference type="Rhea" id="RHEA:28574"/>
        <dbReference type="ChEBI" id="CHEBI:15378"/>
        <dbReference type="ChEBI" id="CHEBI:16189"/>
    </reaction>
</comment>
<comment type="catalytic activity">
    <reaction evidence="1">
        <text>oxalate(in) + chloride(out) = oxalate(out) + chloride(in)</text>
        <dbReference type="Rhea" id="RHEA:72263"/>
        <dbReference type="ChEBI" id="CHEBI:17996"/>
        <dbReference type="ChEBI" id="CHEBI:30623"/>
    </reaction>
</comment>
<comment type="subcellular location">
    <subcellularLocation>
        <location evidence="3">Cell membrane</location>
        <topology evidence="4">Multi-pass membrane protein</topology>
    </subcellularLocation>
    <subcellularLocation>
        <location evidence="3">Lysosome membrane</location>
        <topology evidence="4">Multi-pass membrane protein</topology>
    </subcellularLocation>
    <subcellularLocation>
        <location evidence="2">Apical cell membrane</location>
        <topology evidence="4">Multi-pass membrane protein</topology>
    </subcellularLocation>
    <subcellularLocation>
        <location evidence="2">Basolateral cell membrane</location>
        <topology evidence="4">Multi-pass membrane protein</topology>
    </subcellularLocation>
</comment>
<comment type="similarity">
    <text evidence="4">Belongs to the SLC26A/SulP transporter (TC 2.A.53) family.</text>
</comment>
<organism>
    <name type="scientific">Bos taurus</name>
    <name type="common">Bovine</name>
    <dbReference type="NCBI Taxonomy" id="9913"/>
    <lineage>
        <taxon>Eukaryota</taxon>
        <taxon>Metazoa</taxon>
        <taxon>Chordata</taxon>
        <taxon>Craniata</taxon>
        <taxon>Vertebrata</taxon>
        <taxon>Euteleostomi</taxon>
        <taxon>Mammalia</taxon>
        <taxon>Eutheria</taxon>
        <taxon>Laurasiatheria</taxon>
        <taxon>Artiodactyla</taxon>
        <taxon>Ruminantia</taxon>
        <taxon>Pecora</taxon>
        <taxon>Bovidae</taxon>
        <taxon>Bovinae</taxon>
        <taxon>Bos</taxon>
    </lineage>
</organism>
<dbReference type="EMBL" id="BT021665">
    <property type="protein sequence ID" value="AAX46512.1"/>
    <property type="molecule type" value="mRNA"/>
</dbReference>
<dbReference type="EMBL" id="BC149313">
    <property type="protein sequence ID" value="AAI49314.1"/>
    <property type="molecule type" value="mRNA"/>
</dbReference>
<dbReference type="RefSeq" id="NP_001014866.1">
    <property type="nucleotide sequence ID" value="NM_001014866.1"/>
</dbReference>
<dbReference type="SMR" id="Q58DD2"/>
<dbReference type="FunCoup" id="Q58DD2">
    <property type="interactions" value="175"/>
</dbReference>
<dbReference type="STRING" id="9913.ENSBTAP00000067075"/>
<dbReference type="PaxDb" id="9913-ENSBTAP00000020324"/>
<dbReference type="GeneID" id="507491"/>
<dbReference type="KEGG" id="bta:507491"/>
<dbReference type="CTD" id="284129"/>
<dbReference type="VEuPathDB" id="HostDB:ENSBTAG00000015276"/>
<dbReference type="eggNOG" id="KOG0236">
    <property type="taxonomic scope" value="Eukaryota"/>
</dbReference>
<dbReference type="HOGENOM" id="CLU_003182_12_2_1"/>
<dbReference type="InParanoid" id="Q58DD2"/>
<dbReference type="OMA" id="IPETAGF"/>
<dbReference type="OrthoDB" id="288203at2759"/>
<dbReference type="TreeFam" id="TF323537"/>
<dbReference type="Reactome" id="R-BTA-427601">
    <property type="pathway name" value="Multifunctional anion exchangers"/>
</dbReference>
<dbReference type="Proteomes" id="UP000009136">
    <property type="component" value="Chromosome 19"/>
</dbReference>
<dbReference type="Bgee" id="ENSBTAG00000015276">
    <property type="expression patterns" value="Expressed in hypothalamus and 101 other cell types or tissues"/>
</dbReference>
<dbReference type="GO" id="GO:0016324">
    <property type="term" value="C:apical plasma membrane"/>
    <property type="evidence" value="ECO:0000250"/>
    <property type="project" value="UniProtKB"/>
</dbReference>
<dbReference type="GO" id="GO:0016323">
    <property type="term" value="C:basolateral plasma membrane"/>
    <property type="evidence" value="ECO:0000250"/>
    <property type="project" value="UniProtKB"/>
</dbReference>
<dbReference type="GO" id="GO:0005783">
    <property type="term" value="C:endoplasmic reticulum"/>
    <property type="evidence" value="ECO:0000250"/>
    <property type="project" value="UniProtKB"/>
</dbReference>
<dbReference type="GO" id="GO:0005794">
    <property type="term" value="C:Golgi apparatus"/>
    <property type="evidence" value="ECO:0000250"/>
    <property type="project" value="UniProtKB"/>
</dbReference>
<dbReference type="GO" id="GO:0005765">
    <property type="term" value="C:lysosomal membrane"/>
    <property type="evidence" value="ECO:0000250"/>
    <property type="project" value="UniProtKB"/>
</dbReference>
<dbReference type="GO" id="GO:0016020">
    <property type="term" value="C:membrane"/>
    <property type="evidence" value="ECO:0000250"/>
    <property type="project" value="UniProtKB"/>
</dbReference>
<dbReference type="GO" id="GO:0005886">
    <property type="term" value="C:plasma membrane"/>
    <property type="evidence" value="ECO:0000250"/>
    <property type="project" value="UniProtKB"/>
</dbReference>
<dbReference type="GO" id="GO:0005254">
    <property type="term" value="F:chloride channel activity"/>
    <property type="evidence" value="ECO:0000250"/>
    <property type="project" value="UniProtKB"/>
</dbReference>
<dbReference type="GO" id="GO:0140900">
    <property type="term" value="F:chloride:bicarbonate antiporter activity"/>
    <property type="evidence" value="ECO:0000250"/>
    <property type="project" value="UniProtKB"/>
</dbReference>
<dbReference type="GO" id="GO:0008509">
    <property type="term" value="F:monoatomic anion transmembrane transporter activity"/>
    <property type="evidence" value="ECO:0000250"/>
    <property type="project" value="UniProtKB"/>
</dbReference>
<dbReference type="GO" id="GO:0008271">
    <property type="term" value="F:secondary active sulfate transmembrane transporter activity"/>
    <property type="evidence" value="ECO:0007669"/>
    <property type="project" value="InterPro"/>
</dbReference>
<dbReference type="GO" id="GO:0015116">
    <property type="term" value="F:sulfate transmembrane transporter activity"/>
    <property type="evidence" value="ECO:0000318"/>
    <property type="project" value="GO_Central"/>
</dbReference>
<dbReference type="GO" id="GO:1902476">
    <property type="term" value="P:chloride transmembrane transport"/>
    <property type="evidence" value="ECO:0000318"/>
    <property type="project" value="GO_Central"/>
</dbReference>
<dbReference type="GO" id="GO:0019532">
    <property type="term" value="P:oxalate transport"/>
    <property type="evidence" value="ECO:0000250"/>
    <property type="project" value="UniProtKB"/>
</dbReference>
<dbReference type="GO" id="GO:1902358">
    <property type="term" value="P:sulfate transmembrane transport"/>
    <property type="evidence" value="ECO:0000250"/>
    <property type="project" value="UniProtKB"/>
</dbReference>
<dbReference type="CDD" id="cd07042">
    <property type="entry name" value="STAS_SulP_like_sulfate_transporter"/>
    <property type="match status" value="1"/>
</dbReference>
<dbReference type="FunFam" id="3.30.750.24:FF:000013">
    <property type="entry name" value="Solute carrier family 26 member 11"/>
    <property type="match status" value="1"/>
</dbReference>
<dbReference type="Gene3D" id="3.30.750.24">
    <property type="entry name" value="STAS domain"/>
    <property type="match status" value="1"/>
</dbReference>
<dbReference type="InterPro" id="IPR018045">
    <property type="entry name" value="S04_transporter_CS"/>
</dbReference>
<dbReference type="InterPro" id="IPR011547">
    <property type="entry name" value="SLC26A/SulP_dom"/>
</dbReference>
<dbReference type="InterPro" id="IPR001902">
    <property type="entry name" value="SLC26A/SulP_fam"/>
</dbReference>
<dbReference type="InterPro" id="IPR002645">
    <property type="entry name" value="STAS_dom"/>
</dbReference>
<dbReference type="InterPro" id="IPR036513">
    <property type="entry name" value="STAS_dom_sf"/>
</dbReference>
<dbReference type="PANTHER" id="PTHR11814">
    <property type="entry name" value="SULFATE TRANSPORTER"/>
    <property type="match status" value="1"/>
</dbReference>
<dbReference type="Pfam" id="PF01740">
    <property type="entry name" value="STAS"/>
    <property type="match status" value="1"/>
</dbReference>
<dbReference type="Pfam" id="PF00916">
    <property type="entry name" value="Sulfate_transp"/>
    <property type="match status" value="1"/>
</dbReference>
<dbReference type="SUPFAM" id="SSF52091">
    <property type="entry name" value="SpoIIaa-like"/>
    <property type="match status" value="1"/>
</dbReference>
<dbReference type="PROSITE" id="PS01130">
    <property type="entry name" value="SLC26A"/>
    <property type="match status" value="1"/>
</dbReference>
<dbReference type="PROSITE" id="PS50801">
    <property type="entry name" value="STAS"/>
    <property type="match status" value="1"/>
</dbReference>
<keyword id="KW-0039">Anion exchange</keyword>
<keyword id="KW-1003">Cell membrane</keyword>
<keyword id="KW-0406">Ion transport</keyword>
<keyword id="KW-0458">Lysosome</keyword>
<keyword id="KW-0472">Membrane</keyword>
<keyword id="KW-1185">Reference proteome</keyword>
<keyword id="KW-0812">Transmembrane</keyword>
<keyword id="KW-1133">Transmembrane helix</keyword>
<keyword id="KW-0813">Transport</keyword>
<name>S2611_BOVIN</name>
<sequence length="602" mass="65350">MSPPMSPMKPPKGFAPMSCCWSTETMQKWLPFLGWLPDYTWYALKMDFIAGISVGLTVIPQALAYAEVAGLPPQYGLYSAFMGCFVYFFLGTSRDVTLGPTAIMSLLVSFYTFHEPAYAVLLAFLTGCIQLGMGFLRLGLLLDFISCPVIKGFTSAAAIIIGFGQIKNLLGLQHIPRQFFLQVYYTFHNIGETRVGDAVLGLVCMVLLLVLKLMRDHVPPVHPEMPTGVRLSHGLVWTATTARNALVVSFAALVAYSFQVTGYQPFVLTGKTPEGLPDAHIPPFSVTTANGTISFTEMVQGMGAGLVVVPLMGLLESIAVAKSFASQNNYRINSNQELLALGFTNILGSLFSSYPVTGSFGRTAVNAQSGVCTPAGGLMTGALVLLSLDYLTSLFYYIPKSALAAVIIMAVVPLFDTKIVKTLWRVKRLDLLPLCVTFLLCFWEVQYGILAGTLVSVLILLHSVARPKIQVSEGPMLVLQPASGLHFPAIETLREALLSRALETSPPRSVALDCTHICSIDYTVVLGLGELLEDFHKRGATLALIGLQVPVLRVLLSADLKGVLYFCTLEEAEKYLKQEPGTQPYNGSEDSVPEHKIALLKA</sequence>
<reference evidence="8" key="1">
    <citation type="journal article" date="2005" name="BMC Genomics">
        <title>Characterization of 954 bovine full-CDS cDNA sequences.</title>
        <authorList>
            <person name="Harhay G.P."/>
            <person name="Sonstegard T.S."/>
            <person name="Keele J.W."/>
            <person name="Heaton M.P."/>
            <person name="Clawson M.L."/>
            <person name="Snelling W.M."/>
            <person name="Wiedmann R.T."/>
            <person name="Van Tassell C.P."/>
            <person name="Smith T.P.L."/>
        </authorList>
    </citation>
    <scope>NUCLEOTIDE SEQUENCE [LARGE SCALE MRNA]</scope>
</reference>
<reference evidence="7" key="2">
    <citation type="submission" date="2007-07" db="EMBL/GenBank/DDBJ databases">
        <authorList>
            <consortium name="NIH - Mammalian Gene Collection (MGC) project"/>
        </authorList>
    </citation>
    <scope>NUCLEOTIDE SEQUENCE [LARGE SCALE MRNA]</scope>
    <source>
        <strain evidence="7">Hereford</strain>
        <tissue evidence="7">Fetal pons</tissue>
    </source>
</reference>
<protein>
    <recommendedName>
        <fullName>Sodium-independent sulfate anion transporter</fullName>
    </recommendedName>
    <alternativeName>
        <fullName>Solute carrier family 26 member 11</fullName>
    </alternativeName>
</protein>
<accession>Q58DD2</accession>
<accession>A6QPG7</accession>